<protein>
    <recommendedName>
        <fullName>Matrix metalloproteinase-21</fullName>
        <shortName>MMP-21</shortName>
        <ecNumber>3.4.24.-</ecNumber>
    </recommendedName>
</protein>
<proteinExistence type="evidence at transcript level"/>
<reference key="1">
    <citation type="journal article" date="2001" name="Biochem. Biophys. Res. Commun.">
        <title>Expression of a novel matrix metalloproteinase gene during Cynops early embryogenesis.</title>
        <authorList>
            <person name="Suzuki A.S."/>
            <person name="Tadano Y."/>
            <person name="Yamamoto T."/>
            <person name="Abe S."/>
            <person name="Tajima T."/>
        </authorList>
    </citation>
    <scope>NUCLEOTIDE SEQUENCE [MRNA]</scope>
    <scope>FUNCTION</scope>
    <scope>DEVELOPMENTAL STAGE</scope>
    <source>
        <tissue>Embryo</tissue>
    </source>
</reference>
<name>MMP21_CYNPY</name>
<gene>
    <name type="primary">MMP21</name>
</gene>
<feature type="signal peptide" evidence="4">
    <location>
        <begin position="1"/>
        <end position="22"/>
    </location>
</feature>
<feature type="propeptide" id="PRO_0000028842" evidence="1">
    <location>
        <begin position="23"/>
        <end position="192"/>
    </location>
</feature>
<feature type="chain" id="PRO_0000028843" description="Matrix metalloproteinase-21">
    <location>
        <begin position="193"/>
        <end position="616"/>
    </location>
</feature>
<feature type="repeat" description="Hemopexin 1">
    <location>
        <begin position="376"/>
        <end position="435"/>
    </location>
</feature>
<feature type="repeat" description="Hemopexin 2">
    <location>
        <begin position="437"/>
        <end position="493"/>
    </location>
</feature>
<feature type="repeat" description="Hemopexin 3">
    <location>
        <begin position="494"/>
        <end position="542"/>
    </location>
</feature>
<feature type="repeat" description="Hemopexin 4">
    <location>
        <begin position="549"/>
        <end position="605"/>
    </location>
</feature>
<feature type="region of interest" description="Disordered" evidence="6">
    <location>
        <begin position="157"/>
        <end position="186"/>
    </location>
</feature>
<feature type="short sequence motif" description="Cysteine switch" evidence="1">
    <location>
        <begin position="139"/>
        <end position="146"/>
    </location>
</feature>
<feature type="active site" evidence="5">
    <location>
        <position position="330"/>
    </location>
</feature>
<feature type="binding site" description="in inhibited form" evidence="1">
    <location>
        <position position="141"/>
    </location>
    <ligand>
        <name>Zn(2+)</name>
        <dbReference type="ChEBI" id="CHEBI:29105"/>
        <note>catalytic</note>
    </ligand>
</feature>
<feature type="binding site" evidence="5">
    <location>
        <position position="329"/>
    </location>
    <ligand>
        <name>Zn(2+)</name>
        <dbReference type="ChEBI" id="CHEBI:29105"/>
        <note>catalytic</note>
    </ligand>
</feature>
<feature type="binding site" evidence="5">
    <location>
        <position position="333"/>
    </location>
    <ligand>
        <name>Zn(2+)</name>
        <dbReference type="ChEBI" id="CHEBI:29105"/>
        <note>catalytic</note>
    </ligand>
</feature>
<feature type="binding site" evidence="5">
    <location>
        <position position="339"/>
    </location>
    <ligand>
        <name>Zn(2+)</name>
        <dbReference type="ChEBI" id="CHEBI:29105"/>
        <note>catalytic</note>
    </ligand>
</feature>
<feature type="glycosylation site" description="N-linked (GlcNAc...) asparagine" evidence="4">
    <location>
        <position position="161"/>
    </location>
</feature>
<feature type="glycosylation site" description="N-linked (GlcNAc...) asparagine" evidence="4">
    <location>
        <position position="172"/>
    </location>
</feature>
<feature type="glycosylation site" description="N-linked (GlcNAc...) asparagine" evidence="4">
    <location>
        <position position="181"/>
    </location>
</feature>
<feature type="glycosylation site" description="N-linked (GlcNAc...) asparagine" evidence="4">
    <location>
        <position position="418"/>
    </location>
</feature>
<feature type="glycosylation site" description="N-linked (GlcNAc...) asparagine" evidence="4">
    <location>
        <position position="597"/>
    </location>
</feature>
<feature type="disulfide bond" evidence="1">
    <location>
        <begin position="375"/>
        <end position="606"/>
    </location>
</feature>
<comment type="function">
    <text evidence="2 3 7">May play a role in gastrulation-related cell movement (PubMed:11606053). Plays a specialized role in the generation of left-right asymmetry during embryogenesis. May act as a negative regulator of the NOTCH-signaling pathway (By similarity).</text>
</comment>
<comment type="cofactor">
    <cofactor evidence="1">
        <name>Zn(2+)</name>
        <dbReference type="ChEBI" id="CHEBI:29105"/>
    </cofactor>
    <text evidence="1">Binds 1 zinc ion per subunit.</text>
</comment>
<comment type="cofactor">
    <cofactor evidence="1">
        <name>Ca(2+)</name>
        <dbReference type="ChEBI" id="CHEBI:29108"/>
    </cofactor>
</comment>
<comment type="subcellular location">
    <subcellularLocation>
        <location evidence="8">Secreted</location>
    </subcellularLocation>
</comment>
<comment type="developmental stage">
    <text evidence="7">Detected during early embryogenesis, then, gradually decreased, but increased again starting in late gastrula. There are regional diiferences in the level of expression at late gastrula: the involved archenteron roof is the predominant site, while there is weak expression in the neuroectoderm and epidermal ectoderm.</text>
</comment>
<comment type="domain">
    <text>The conserved cysteine present in the cysteine-switch motif binds the catalytic zinc ion, thus inhibiting the enzyme. The dissociation of the cysteine from the zinc ion upon the activation-peptide release activates the enzyme.</text>
</comment>
<comment type="PTM">
    <text evidence="1">The precursor is cleaved by a furin endopeptidase.</text>
</comment>
<comment type="similarity">
    <text evidence="8">Belongs to the peptidase M10A family.</text>
</comment>
<keyword id="KW-0106">Calcium</keyword>
<keyword id="KW-0165">Cleavage on pair of basic residues</keyword>
<keyword id="KW-1015">Disulfide bond</keyword>
<keyword id="KW-0325">Glycoprotein</keyword>
<keyword id="KW-0378">Hydrolase</keyword>
<keyword id="KW-0479">Metal-binding</keyword>
<keyword id="KW-0482">Metalloprotease</keyword>
<keyword id="KW-0645">Protease</keyword>
<keyword id="KW-0677">Repeat</keyword>
<keyword id="KW-0964">Secreted</keyword>
<keyword id="KW-0732">Signal</keyword>
<keyword id="KW-0862">Zinc</keyword>
<keyword id="KW-0865">Zymogen</keyword>
<sequence length="616" mass="70428">MPTAPALGALLLLLGALTPGHQEKLFHSRDHSDLQPSPQHQAELVTDLQSAQQFLSKYGWTEPVKWEGTSSKNAAELPRYGDADLMQEGASISRYGQEFPLEPTQAPAFVEALRKFQTLNGLPATGKLDDSTIAAMNKPRCGVPDNQIGKESAIVKSNSNNVTEKASGKSLNTTTNQNPENGTSTSKIRKKRFLQMLAAPVRYKDQANQGSTVRGAFSKKLLKWRLIGEGYSSQLSIDEQRYVFKTAFRMWSEVMPLDFEEDLTSPMSLIDVKLGFGRGRHLGCTRSFDGSGQEFAHAWFLGDIHFDDDEHFTAPSSDSGISLLKVAVHEIGHVLGLSHIYQTGSIMQPNYIPQEAGFELDWTDRKAIQMLYGTCEGSFDAVFDWIWKERNQYGELVLRYNTYFFRNAWYWLYENRKNRTRYGDPVTVSLGWHGIPAEGIDAFVHVWTWTEDATYFFKGTQYWRYDSENDQAYIKDAQGNQYPRLISEGFPKIPSPINTAFFDRRDQFIYFFKDAHVYAFDVKRNMVANHYPKRIIDVFPAVVRNNHPFGNIDAAYYAYTHNSIFLFKGKEYWKVVSDKDRQQNPKLPRNGLFLKKNISEQWTDICNVHSSMLKMR</sequence>
<dbReference type="EC" id="3.4.24.-"/>
<dbReference type="EMBL" id="AB054185">
    <property type="protein sequence ID" value="BAB62075.1"/>
    <property type="molecule type" value="mRNA"/>
</dbReference>
<dbReference type="PIR" id="JC7776">
    <property type="entry name" value="JC7776"/>
</dbReference>
<dbReference type="SMR" id="Q90YC2"/>
<dbReference type="MEROPS" id="M10.026"/>
<dbReference type="GlyCosmos" id="Q90YC2">
    <property type="glycosylation" value="5 sites, No reported glycans"/>
</dbReference>
<dbReference type="GO" id="GO:0031012">
    <property type="term" value="C:extracellular matrix"/>
    <property type="evidence" value="ECO:0007669"/>
    <property type="project" value="InterPro"/>
</dbReference>
<dbReference type="GO" id="GO:0005576">
    <property type="term" value="C:extracellular region"/>
    <property type="evidence" value="ECO:0007669"/>
    <property type="project" value="UniProtKB-SubCell"/>
</dbReference>
<dbReference type="GO" id="GO:0004222">
    <property type="term" value="F:metalloendopeptidase activity"/>
    <property type="evidence" value="ECO:0007669"/>
    <property type="project" value="InterPro"/>
</dbReference>
<dbReference type="GO" id="GO:0008270">
    <property type="term" value="F:zinc ion binding"/>
    <property type="evidence" value="ECO:0007669"/>
    <property type="project" value="InterPro"/>
</dbReference>
<dbReference type="GO" id="GO:0030574">
    <property type="term" value="P:collagen catabolic process"/>
    <property type="evidence" value="ECO:0007669"/>
    <property type="project" value="TreeGrafter"/>
</dbReference>
<dbReference type="GO" id="GO:0061371">
    <property type="term" value="P:determination of heart left/right asymmetry"/>
    <property type="evidence" value="ECO:0000250"/>
    <property type="project" value="UniProtKB"/>
</dbReference>
<dbReference type="GO" id="GO:0007368">
    <property type="term" value="P:determination of left/right symmetry"/>
    <property type="evidence" value="ECO:0000250"/>
    <property type="project" value="UniProtKB"/>
</dbReference>
<dbReference type="GO" id="GO:0030198">
    <property type="term" value="P:extracellular matrix organization"/>
    <property type="evidence" value="ECO:0007669"/>
    <property type="project" value="TreeGrafter"/>
</dbReference>
<dbReference type="GO" id="GO:0006508">
    <property type="term" value="P:proteolysis"/>
    <property type="evidence" value="ECO:0007669"/>
    <property type="project" value="UniProtKB-KW"/>
</dbReference>
<dbReference type="CDD" id="cd00094">
    <property type="entry name" value="HX"/>
    <property type="match status" value="1"/>
</dbReference>
<dbReference type="CDD" id="cd04278">
    <property type="entry name" value="ZnMc_MMP"/>
    <property type="match status" value="1"/>
</dbReference>
<dbReference type="FunFam" id="2.110.10.10:FF:000012">
    <property type="entry name" value="Matrix metallopeptidase 21"/>
    <property type="match status" value="1"/>
</dbReference>
<dbReference type="FunFam" id="2.110.10.10:FF:000015">
    <property type="entry name" value="Matrix metallopeptidase 21"/>
    <property type="match status" value="1"/>
</dbReference>
<dbReference type="Gene3D" id="3.40.390.10">
    <property type="entry name" value="Collagenase (Catalytic Domain)"/>
    <property type="match status" value="1"/>
</dbReference>
<dbReference type="Gene3D" id="2.110.10.10">
    <property type="entry name" value="Hemopexin-like domain"/>
    <property type="match status" value="2"/>
</dbReference>
<dbReference type="InterPro" id="IPR000585">
    <property type="entry name" value="Hemopexin-like_dom"/>
</dbReference>
<dbReference type="InterPro" id="IPR036375">
    <property type="entry name" value="Hemopexin-like_dom_sf"/>
</dbReference>
<dbReference type="InterPro" id="IPR018487">
    <property type="entry name" value="Hemopexin-like_repeat"/>
</dbReference>
<dbReference type="InterPro" id="IPR033739">
    <property type="entry name" value="M10A_MMP"/>
</dbReference>
<dbReference type="InterPro" id="IPR024079">
    <property type="entry name" value="MetalloPept_cat_dom_sf"/>
</dbReference>
<dbReference type="InterPro" id="IPR001818">
    <property type="entry name" value="Pept_M10_metallopeptidase"/>
</dbReference>
<dbReference type="InterPro" id="IPR021190">
    <property type="entry name" value="Pept_M10A"/>
</dbReference>
<dbReference type="InterPro" id="IPR006026">
    <property type="entry name" value="Peptidase_Metallo"/>
</dbReference>
<dbReference type="InterPro" id="IPR002477">
    <property type="entry name" value="Peptidoglycan-bd-like"/>
</dbReference>
<dbReference type="InterPro" id="IPR036365">
    <property type="entry name" value="PGBD-like_sf"/>
</dbReference>
<dbReference type="PANTHER" id="PTHR10201">
    <property type="entry name" value="MATRIX METALLOPROTEINASE"/>
    <property type="match status" value="1"/>
</dbReference>
<dbReference type="PANTHER" id="PTHR10201:SF324">
    <property type="entry name" value="MATRIX METALLOPROTEINASE-21"/>
    <property type="match status" value="1"/>
</dbReference>
<dbReference type="Pfam" id="PF00045">
    <property type="entry name" value="Hemopexin"/>
    <property type="match status" value="2"/>
</dbReference>
<dbReference type="Pfam" id="PF00413">
    <property type="entry name" value="Peptidase_M10"/>
    <property type="match status" value="1"/>
</dbReference>
<dbReference type="Pfam" id="PF01471">
    <property type="entry name" value="PG_binding_1"/>
    <property type="match status" value="1"/>
</dbReference>
<dbReference type="PIRSF" id="PIRSF001191">
    <property type="entry name" value="Peptidase_M10A_matrix"/>
    <property type="match status" value="1"/>
</dbReference>
<dbReference type="PRINTS" id="PR00138">
    <property type="entry name" value="MATRIXIN"/>
</dbReference>
<dbReference type="SMART" id="SM00120">
    <property type="entry name" value="HX"/>
    <property type="match status" value="4"/>
</dbReference>
<dbReference type="SMART" id="SM00235">
    <property type="entry name" value="ZnMc"/>
    <property type="match status" value="1"/>
</dbReference>
<dbReference type="SUPFAM" id="SSF50923">
    <property type="entry name" value="Hemopexin-like domain"/>
    <property type="match status" value="1"/>
</dbReference>
<dbReference type="SUPFAM" id="SSF55486">
    <property type="entry name" value="Metalloproteases ('zincins'), catalytic domain"/>
    <property type="match status" value="1"/>
</dbReference>
<dbReference type="SUPFAM" id="SSF47090">
    <property type="entry name" value="PGBD-like"/>
    <property type="match status" value="1"/>
</dbReference>
<dbReference type="PROSITE" id="PS51642">
    <property type="entry name" value="HEMOPEXIN_2"/>
    <property type="match status" value="4"/>
</dbReference>
<dbReference type="PROSITE" id="PS00142">
    <property type="entry name" value="ZINC_PROTEASE"/>
    <property type="match status" value="1"/>
</dbReference>
<organism>
    <name type="scientific">Cynops pyrrhogaster</name>
    <name type="common">Japanese fire-bellied newt</name>
    <name type="synonym">Molge pyrrhogaster</name>
    <dbReference type="NCBI Taxonomy" id="8330"/>
    <lineage>
        <taxon>Eukaryota</taxon>
        <taxon>Metazoa</taxon>
        <taxon>Chordata</taxon>
        <taxon>Craniata</taxon>
        <taxon>Vertebrata</taxon>
        <taxon>Euteleostomi</taxon>
        <taxon>Amphibia</taxon>
        <taxon>Batrachia</taxon>
        <taxon>Caudata</taxon>
        <taxon>Salamandroidea</taxon>
        <taxon>Salamandridae</taxon>
        <taxon>Pleurodelinae</taxon>
        <taxon>Cynops</taxon>
    </lineage>
</organism>
<evidence type="ECO:0000250" key="1"/>
<evidence type="ECO:0000250" key="2">
    <source>
        <dbReference type="UniProtKB" id="O93470"/>
    </source>
</evidence>
<evidence type="ECO:0000250" key="3">
    <source>
        <dbReference type="UniProtKB" id="Q8N119"/>
    </source>
</evidence>
<evidence type="ECO:0000255" key="4"/>
<evidence type="ECO:0000255" key="5">
    <source>
        <dbReference type="PROSITE-ProRule" id="PRU10095"/>
    </source>
</evidence>
<evidence type="ECO:0000256" key="6">
    <source>
        <dbReference type="SAM" id="MobiDB-lite"/>
    </source>
</evidence>
<evidence type="ECO:0000269" key="7">
    <source>
    </source>
</evidence>
<evidence type="ECO:0000305" key="8"/>
<accession>Q90YC2</accession>